<evidence type="ECO:0000255" key="1">
    <source>
        <dbReference type="HAMAP-Rule" id="MF_00494"/>
    </source>
</evidence>
<keyword id="KW-0963">Cytoplasm</keyword>
<keyword id="KW-0570">Pentose shunt</keyword>
<keyword id="KW-0704">Schiff base</keyword>
<keyword id="KW-0808">Transferase</keyword>
<proteinExistence type="inferred from homology"/>
<comment type="function">
    <text evidence="1">Transaldolase is important for the balance of metabolites in the pentose-phosphate pathway.</text>
</comment>
<comment type="catalytic activity">
    <reaction evidence="1">
        <text>D-sedoheptulose 7-phosphate + D-glyceraldehyde 3-phosphate = D-erythrose 4-phosphate + beta-D-fructose 6-phosphate</text>
        <dbReference type="Rhea" id="RHEA:17053"/>
        <dbReference type="ChEBI" id="CHEBI:16897"/>
        <dbReference type="ChEBI" id="CHEBI:57483"/>
        <dbReference type="ChEBI" id="CHEBI:57634"/>
        <dbReference type="ChEBI" id="CHEBI:59776"/>
        <dbReference type="EC" id="2.2.1.2"/>
    </reaction>
</comment>
<comment type="pathway">
    <text evidence="1">Carbohydrate degradation; pentose phosphate pathway; D-glyceraldehyde 3-phosphate and beta-D-fructose 6-phosphate from D-ribose 5-phosphate and D-xylulose 5-phosphate (non-oxidative stage): step 2/3.</text>
</comment>
<comment type="subcellular location">
    <subcellularLocation>
        <location evidence="1">Cytoplasm</location>
    </subcellularLocation>
</comment>
<comment type="similarity">
    <text evidence="1">Belongs to the transaldolase family. Type 3B subfamily.</text>
</comment>
<sequence length="214" mass="23272">MKFFLDTANVAAIKAINELGVVDGVTTNPTIISREGRDFETVIKEICDIVDGPISAEVTGLTADAMVEEARSIAKWHDNVVVKIPMTTEGLKATNILSKEGIKTNVTLIFTVSQGLMAMKAGATYISPFIGRLEDIGTDAYQLISDLREIIDLYDFQAEIIAASIRTTAHVEAVAKLGAHIATIPDPLFAKMTQHPLTTNGLKTFMEDWASFKK</sequence>
<reference key="1">
    <citation type="journal article" date="2006" name="Proc. Natl. Acad. Sci. U.S.A.">
        <title>Molecular genetic anatomy of inter- and intraserotype variation in the human bacterial pathogen group A Streptococcus.</title>
        <authorList>
            <person name="Beres S.B."/>
            <person name="Richter E.W."/>
            <person name="Nagiec M.J."/>
            <person name="Sumby P."/>
            <person name="Porcella S.F."/>
            <person name="DeLeo F.R."/>
            <person name="Musser J.M."/>
        </authorList>
    </citation>
    <scope>NUCLEOTIDE SEQUENCE [LARGE SCALE GENOMIC DNA]</scope>
    <source>
        <strain>MGAS10750</strain>
    </source>
</reference>
<feature type="chain" id="PRO_1000060480" description="Probable transaldolase">
    <location>
        <begin position="1"/>
        <end position="214"/>
    </location>
</feature>
<feature type="active site" description="Schiff-base intermediate with substrate" evidence="1">
    <location>
        <position position="83"/>
    </location>
</feature>
<protein>
    <recommendedName>
        <fullName evidence="1">Probable transaldolase</fullName>
        <ecNumber evidence="1">2.2.1.2</ecNumber>
    </recommendedName>
</protein>
<name>TAL_STRPF</name>
<accession>Q1J5E9</accession>
<dbReference type="EC" id="2.2.1.2" evidence="1"/>
<dbReference type="EMBL" id="CP000262">
    <property type="protein sequence ID" value="ABF38437.1"/>
    <property type="molecule type" value="Genomic_DNA"/>
</dbReference>
<dbReference type="SMR" id="Q1J5E9"/>
<dbReference type="KEGG" id="spi:MGAS10750_Spy1487"/>
<dbReference type="HOGENOM" id="CLU_079764_0_0_9"/>
<dbReference type="UniPathway" id="UPA00115">
    <property type="reaction ID" value="UER00414"/>
</dbReference>
<dbReference type="Proteomes" id="UP000002434">
    <property type="component" value="Chromosome"/>
</dbReference>
<dbReference type="GO" id="GO:0005737">
    <property type="term" value="C:cytoplasm"/>
    <property type="evidence" value="ECO:0007669"/>
    <property type="project" value="UniProtKB-SubCell"/>
</dbReference>
<dbReference type="GO" id="GO:0016832">
    <property type="term" value="F:aldehyde-lyase activity"/>
    <property type="evidence" value="ECO:0007669"/>
    <property type="project" value="InterPro"/>
</dbReference>
<dbReference type="GO" id="GO:0004801">
    <property type="term" value="F:transaldolase activity"/>
    <property type="evidence" value="ECO:0007669"/>
    <property type="project" value="UniProtKB-UniRule"/>
</dbReference>
<dbReference type="GO" id="GO:0005975">
    <property type="term" value="P:carbohydrate metabolic process"/>
    <property type="evidence" value="ECO:0007669"/>
    <property type="project" value="InterPro"/>
</dbReference>
<dbReference type="GO" id="GO:0006098">
    <property type="term" value="P:pentose-phosphate shunt"/>
    <property type="evidence" value="ECO:0007669"/>
    <property type="project" value="UniProtKB-UniRule"/>
</dbReference>
<dbReference type="CDD" id="cd00956">
    <property type="entry name" value="Transaldolase_FSA"/>
    <property type="match status" value="1"/>
</dbReference>
<dbReference type="FunFam" id="3.20.20.70:FF:000018">
    <property type="entry name" value="Probable transaldolase"/>
    <property type="match status" value="1"/>
</dbReference>
<dbReference type="Gene3D" id="3.20.20.70">
    <property type="entry name" value="Aldolase class I"/>
    <property type="match status" value="1"/>
</dbReference>
<dbReference type="HAMAP" id="MF_00494">
    <property type="entry name" value="Transaldolase_3b"/>
    <property type="match status" value="1"/>
</dbReference>
<dbReference type="InterPro" id="IPR013785">
    <property type="entry name" value="Aldolase_TIM"/>
</dbReference>
<dbReference type="InterPro" id="IPR001585">
    <property type="entry name" value="TAL/FSA"/>
</dbReference>
<dbReference type="InterPro" id="IPR022999">
    <property type="entry name" value="Transaldolase_3B"/>
</dbReference>
<dbReference type="InterPro" id="IPR004731">
    <property type="entry name" value="Transaldolase_3B/F6P_aldolase"/>
</dbReference>
<dbReference type="InterPro" id="IPR018225">
    <property type="entry name" value="Transaldolase_AS"/>
</dbReference>
<dbReference type="InterPro" id="IPR033919">
    <property type="entry name" value="TSA/FSA_arc/bac"/>
</dbReference>
<dbReference type="NCBIfam" id="TIGR00875">
    <property type="entry name" value="fsa_talC_mipB"/>
    <property type="match status" value="1"/>
</dbReference>
<dbReference type="PANTHER" id="PTHR10683">
    <property type="entry name" value="TRANSALDOLASE"/>
    <property type="match status" value="1"/>
</dbReference>
<dbReference type="PANTHER" id="PTHR10683:SF36">
    <property type="entry name" value="TRANSALDOLASE"/>
    <property type="match status" value="1"/>
</dbReference>
<dbReference type="Pfam" id="PF00923">
    <property type="entry name" value="TAL_FSA"/>
    <property type="match status" value="1"/>
</dbReference>
<dbReference type="SUPFAM" id="SSF51569">
    <property type="entry name" value="Aldolase"/>
    <property type="match status" value="1"/>
</dbReference>
<dbReference type="PROSITE" id="PS01054">
    <property type="entry name" value="TRANSALDOLASE_1"/>
    <property type="match status" value="1"/>
</dbReference>
<dbReference type="PROSITE" id="PS00958">
    <property type="entry name" value="TRANSALDOLASE_2"/>
    <property type="match status" value="1"/>
</dbReference>
<gene>
    <name evidence="1" type="primary">tal</name>
    <name type="ordered locus">MGAS10750_Spy1487</name>
</gene>
<organism>
    <name type="scientific">Streptococcus pyogenes serotype M4 (strain MGAS10750)</name>
    <dbReference type="NCBI Taxonomy" id="370554"/>
    <lineage>
        <taxon>Bacteria</taxon>
        <taxon>Bacillati</taxon>
        <taxon>Bacillota</taxon>
        <taxon>Bacilli</taxon>
        <taxon>Lactobacillales</taxon>
        <taxon>Streptococcaceae</taxon>
        <taxon>Streptococcus</taxon>
    </lineage>
</organism>